<protein>
    <recommendedName>
        <fullName evidence="1">UPF0301 protein FTN_0866</fullName>
    </recommendedName>
</protein>
<feature type="chain" id="PRO_1000046656" description="UPF0301 protein FTN_0866">
    <location>
        <begin position="1"/>
        <end position="194"/>
    </location>
</feature>
<reference key="1">
    <citation type="journal article" date="2007" name="Genome Biol.">
        <title>Comparison of Francisella tularensis genomes reveals evolutionary events associated with the emergence of human pathogenic strains.</title>
        <authorList>
            <person name="Rohmer L."/>
            <person name="Fong C."/>
            <person name="Abmayr S."/>
            <person name="Wasnick M."/>
            <person name="Larson Freeman T.J."/>
            <person name="Radey M."/>
            <person name="Guina T."/>
            <person name="Svensson K."/>
            <person name="Hayden H.S."/>
            <person name="Jacobs M."/>
            <person name="Gallagher L.A."/>
            <person name="Manoil C."/>
            <person name="Ernst R.K."/>
            <person name="Drees B."/>
            <person name="Buckley D."/>
            <person name="Haugen E."/>
            <person name="Bovee D."/>
            <person name="Zhou Y."/>
            <person name="Chang J."/>
            <person name="Levy R."/>
            <person name="Lim R."/>
            <person name="Gillett W."/>
            <person name="Guenthener D."/>
            <person name="Kang A."/>
            <person name="Shaffer S.A."/>
            <person name="Taylor G."/>
            <person name="Chen J."/>
            <person name="Gallis B."/>
            <person name="D'Argenio D.A."/>
            <person name="Forsman M."/>
            <person name="Olson M.V."/>
            <person name="Goodlett D.R."/>
            <person name="Kaul R."/>
            <person name="Miller S.I."/>
            <person name="Brittnacher M.J."/>
        </authorList>
    </citation>
    <scope>NUCLEOTIDE SEQUENCE [LARGE SCALE GENOMIC DNA]</scope>
    <source>
        <strain>U112</strain>
    </source>
</reference>
<proteinExistence type="inferred from homology"/>
<organism>
    <name type="scientific">Francisella tularensis subsp. novicida (strain U112)</name>
    <dbReference type="NCBI Taxonomy" id="401614"/>
    <lineage>
        <taxon>Bacteria</taxon>
        <taxon>Pseudomonadati</taxon>
        <taxon>Pseudomonadota</taxon>
        <taxon>Gammaproteobacteria</taxon>
        <taxon>Thiotrichales</taxon>
        <taxon>Francisellaceae</taxon>
        <taxon>Francisella</taxon>
    </lineage>
</organism>
<evidence type="ECO:0000255" key="1">
    <source>
        <dbReference type="HAMAP-Rule" id="MF_00758"/>
    </source>
</evidence>
<comment type="similarity">
    <text evidence="1">Belongs to the UPF0301 (AlgH) family.</text>
</comment>
<gene>
    <name type="ordered locus">FTN_0866</name>
</gene>
<dbReference type="EMBL" id="CP000439">
    <property type="protein sequence ID" value="ABK89754.1"/>
    <property type="molecule type" value="Genomic_DNA"/>
</dbReference>
<dbReference type="RefSeq" id="WP_003021066.1">
    <property type="nucleotide sequence ID" value="NZ_CP009633.1"/>
</dbReference>
<dbReference type="SMR" id="A0Q689"/>
<dbReference type="KEGG" id="ftn:FTN_0866"/>
<dbReference type="KEGG" id="ftx:AW25_1152"/>
<dbReference type="BioCyc" id="FTUL401614:G1G75-902-MONOMER"/>
<dbReference type="Proteomes" id="UP000000762">
    <property type="component" value="Chromosome"/>
</dbReference>
<dbReference type="GO" id="GO:0005829">
    <property type="term" value="C:cytosol"/>
    <property type="evidence" value="ECO:0007669"/>
    <property type="project" value="TreeGrafter"/>
</dbReference>
<dbReference type="Gene3D" id="3.40.1740.10">
    <property type="entry name" value="VC0467-like"/>
    <property type="match status" value="1"/>
</dbReference>
<dbReference type="Gene3D" id="3.30.70.1300">
    <property type="entry name" value="VC0467-like domains"/>
    <property type="match status" value="1"/>
</dbReference>
<dbReference type="HAMAP" id="MF_00758">
    <property type="entry name" value="UPF0301"/>
    <property type="match status" value="1"/>
</dbReference>
<dbReference type="InterPro" id="IPR003774">
    <property type="entry name" value="AlgH-like"/>
</dbReference>
<dbReference type="PANTHER" id="PTHR30327">
    <property type="entry name" value="UNCHARACTERIZED PROTEIN YQGE"/>
    <property type="match status" value="1"/>
</dbReference>
<dbReference type="PANTHER" id="PTHR30327:SF1">
    <property type="entry name" value="UPF0301 PROTEIN YQGE"/>
    <property type="match status" value="1"/>
</dbReference>
<dbReference type="Pfam" id="PF02622">
    <property type="entry name" value="DUF179"/>
    <property type="match status" value="1"/>
</dbReference>
<dbReference type="SUPFAM" id="SSF143456">
    <property type="entry name" value="VC0467-like"/>
    <property type="match status" value="1"/>
</dbReference>
<accession>A0Q689</accession>
<name>Y866_FRATN</name>
<sequence>MYQNHKSEILLATPLIKDDIVFTKSVVYLCQNDRHGAMGLIINKPLADTLKDVFEELHIPHTNTFKEILEYPLYMGGPISPHKIMILHTTNGRNYTSTIKLDEGLAITASIDILEDIANNILPEYFLPVVGYSCWTANQLTDEIKSNDWIVTNKLNKKILFNHENKVKWQNHLEHAGYTLQSLDTLFNRNTGNC</sequence>